<dbReference type="EC" id="2.7.11.1"/>
<dbReference type="EMBL" id="AE016819">
    <property type="protein sequence ID" value="AAS53406.1"/>
    <property type="molecule type" value="Genomic_DNA"/>
</dbReference>
<dbReference type="RefSeq" id="NP_985582.1">
    <property type="nucleotide sequence ID" value="NM_210936.1"/>
</dbReference>
<dbReference type="SMR" id="Q754N7"/>
<dbReference type="FunCoup" id="Q754N7">
    <property type="interactions" value="633"/>
</dbReference>
<dbReference type="STRING" id="284811.Q754N7"/>
<dbReference type="EnsemblFungi" id="AAS53406">
    <property type="protein sequence ID" value="AAS53406"/>
    <property type="gene ID" value="AGOS_AFR035W"/>
</dbReference>
<dbReference type="GeneID" id="4621822"/>
<dbReference type="KEGG" id="ago:AGOS_AFR035W"/>
<dbReference type="eggNOG" id="KOG0605">
    <property type="taxonomic scope" value="Eukaryota"/>
</dbReference>
<dbReference type="HOGENOM" id="CLU_000288_67_2_1"/>
<dbReference type="InParanoid" id="Q754N7"/>
<dbReference type="OMA" id="HDNAYYQ"/>
<dbReference type="OrthoDB" id="3638488at2759"/>
<dbReference type="Proteomes" id="UP000000591">
    <property type="component" value="Chromosome VI"/>
</dbReference>
<dbReference type="GO" id="GO:0005938">
    <property type="term" value="C:cell cortex"/>
    <property type="evidence" value="ECO:0007669"/>
    <property type="project" value="EnsemblFungi"/>
</dbReference>
<dbReference type="GO" id="GO:0005935">
    <property type="term" value="C:cellular bud neck"/>
    <property type="evidence" value="ECO:0007669"/>
    <property type="project" value="EnsemblFungi"/>
</dbReference>
<dbReference type="GO" id="GO:0005934">
    <property type="term" value="C:cellular bud tip"/>
    <property type="evidence" value="ECO:0007669"/>
    <property type="project" value="EnsemblFungi"/>
</dbReference>
<dbReference type="GO" id="GO:0000131">
    <property type="term" value="C:incipient cellular bud site"/>
    <property type="evidence" value="ECO:0007669"/>
    <property type="project" value="EnsemblFungi"/>
</dbReference>
<dbReference type="GO" id="GO:0043332">
    <property type="term" value="C:mating projection tip"/>
    <property type="evidence" value="ECO:0007669"/>
    <property type="project" value="EnsemblFungi"/>
</dbReference>
<dbReference type="GO" id="GO:0005634">
    <property type="term" value="C:nucleus"/>
    <property type="evidence" value="ECO:0007669"/>
    <property type="project" value="EnsemblFungi"/>
</dbReference>
<dbReference type="GO" id="GO:1902554">
    <property type="term" value="C:serine/threonine protein kinase complex"/>
    <property type="evidence" value="ECO:0007669"/>
    <property type="project" value="EnsemblFungi"/>
</dbReference>
<dbReference type="GO" id="GO:0005524">
    <property type="term" value="F:ATP binding"/>
    <property type="evidence" value="ECO:0007669"/>
    <property type="project" value="UniProtKB-KW"/>
</dbReference>
<dbReference type="GO" id="GO:0042802">
    <property type="term" value="F:identical protein binding"/>
    <property type="evidence" value="ECO:0007669"/>
    <property type="project" value="EnsemblFungi"/>
</dbReference>
<dbReference type="GO" id="GO:0106310">
    <property type="term" value="F:protein serine kinase activity"/>
    <property type="evidence" value="ECO:0007669"/>
    <property type="project" value="RHEA"/>
</dbReference>
<dbReference type="GO" id="GO:0004674">
    <property type="term" value="F:protein serine/threonine kinase activity"/>
    <property type="evidence" value="ECO:0000318"/>
    <property type="project" value="GO_Central"/>
</dbReference>
<dbReference type="GO" id="GO:0007118">
    <property type="term" value="P:budding cell apical bud growth"/>
    <property type="evidence" value="ECO:0007669"/>
    <property type="project" value="EnsemblFungi"/>
</dbReference>
<dbReference type="GO" id="GO:0030950">
    <property type="term" value="P:establishment or maintenance of actin cytoskeleton polarity"/>
    <property type="evidence" value="ECO:0007669"/>
    <property type="project" value="EnsemblFungi"/>
</dbReference>
<dbReference type="GO" id="GO:0035556">
    <property type="term" value="P:intracellular signal transduction"/>
    <property type="evidence" value="ECO:0000318"/>
    <property type="project" value="GO_Central"/>
</dbReference>
<dbReference type="GO" id="GO:0060237">
    <property type="term" value="P:regulation of fungal-type cell wall organization"/>
    <property type="evidence" value="ECO:0007669"/>
    <property type="project" value="EnsemblFungi"/>
</dbReference>
<dbReference type="GO" id="GO:0050708">
    <property type="term" value="P:regulation of protein secretion"/>
    <property type="evidence" value="ECO:0007669"/>
    <property type="project" value="EnsemblFungi"/>
</dbReference>
<dbReference type="GO" id="GO:0000920">
    <property type="term" value="P:septum digestion after cytokinesis"/>
    <property type="evidence" value="ECO:0007669"/>
    <property type="project" value="EnsemblFungi"/>
</dbReference>
<dbReference type="CDD" id="cd21773">
    <property type="entry name" value="MobB_CBK1"/>
    <property type="match status" value="1"/>
</dbReference>
<dbReference type="CDD" id="cd05629">
    <property type="entry name" value="STKc_NDR_like_fungal"/>
    <property type="match status" value="1"/>
</dbReference>
<dbReference type="FunFam" id="1.10.510.10:FF:000024">
    <property type="entry name" value="Probable serine/threonine-protein kinase cot-1"/>
    <property type="match status" value="1"/>
</dbReference>
<dbReference type="FunFam" id="1.10.510.10:FF:000828">
    <property type="entry name" value="Serine/threonine-protein kinase CBK1"/>
    <property type="match status" value="1"/>
</dbReference>
<dbReference type="FunFam" id="3.30.200.20:FF:000767">
    <property type="entry name" value="Serine/threonine-protein kinase CBK1"/>
    <property type="match status" value="1"/>
</dbReference>
<dbReference type="FunFam" id="3.30.200.20:FF:000192">
    <property type="entry name" value="Serine/threonine-protein kinase cot-1"/>
    <property type="match status" value="1"/>
</dbReference>
<dbReference type="Gene3D" id="3.30.200.20">
    <property type="entry name" value="Phosphorylase Kinase, domain 1"/>
    <property type="match status" value="2"/>
</dbReference>
<dbReference type="Gene3D" id="1.10.510.10">
    <property type="entry name" value="Transferase(Phosphotransferase) domain 1"/>
    <property type="match status" value="1"/>
</dbReference>
<dbReference type="InterPro" id="IPR000961">
    <property type="entry name" value="AGC-kinase_C"/>
</dbReference>
<dbReference type="InterPro" id="IPR011009">
    <property type="entry name" value="Kinase-like_dom_sf"/>
</dbReference>
<dbReference type="InterPro" id="IPR000719">
    <property type="entry name" value="Prot_kinase_dom"/>
</dbReference>
<dbReference type="InterPro" id="IPR017441">
    <property type="entry name" value="Protein_kinase_ATP_BS"/>
</dbReference>
<dbReference type="InterPro" id="IPR050839">
    <property type="entry name" value="Rho-assoc_Ser/Thr_Kinase"/>
</dbReference>
<dbReference type="InterPro" id="IPR008271">
    <property type="entry name" value="Ser/Thr_kinase_AS"/>
</dbReference>
<dbReference type="PANTHER" id="PTHR22988:SF76">
    <property type="entry name" value="CHROMOSOME UNDETERMINED SCAFFOLD_135, WHOLE GENOME SHOTGUN SEQUENCE"/>
    <property type="match status" value="1"/>
</dbReference>
<dbReference type="PANTHER" id="PTHR22988">
    <property type="entry name" value="MYOTONIC DYSTROPHY S/T KINASE-RELATED"/>
    <property type="match status" value="1"/>
</dbReference>
<dbReference type="Pfam" id="PF00069">
    <property type="entry name" value="Pkinase"/>
    <property type="match status" value="2"/>
</dbReference>
<dbReference type="SMART" id="SM00133">
    <property type="entry name" value="S_TK_X"/>
    <property type="match status" value="1"/>
</dbReference>
<dbReference type="SMART" id="SM00220">
    <property type="entry name" value="S_TKc"/>
    <property type="match status" value="1"/>
</dbReference>
<dbReference type="SUPFAM" id="SSF56112">
    <property type="entry name" value="Protein kinase-like (PK-like)"/>
    <property type="match status" value="1"/>
</dbReference>
<dbReference type="PROSITE" id="PS51285">
    <property type="entry name" value="AGC_KINASE_CTER"/>
    <property type="match status" value="1"/>
</dbReference>
<dbReference type="PROSITE" id="PS00107">
    <property type="entry name" value="PROTEIN_KINASE_ATP"/>
    <property type="match status" value="1"/>
</dbReference>
<dbReference type="PROSITE" id="PS50011">
    <property type="entry name" value="PROTEIN_KINASE_DOM"/>
    <property type="match status" value="1"/>
</dbReference>
<dbReference type="PROSITE" id="PS00108">
    <property type="entry name" value="PROTEIN_KINASE_ST"/>
    <property type="match status" value="1"/>
</dbReference>
<feature type="chain" id="PRO_0000085691" description="Serine/threonine-protein kinase CBK1">
    <location>
        <begin position="1"/>
        <end position="719"/>
    </location>
</feature>
<feature type="domain" description="Protein kinase" evidence="2">
    <location>
        <begin position="310"/>
        <end position="631"/>
    </location>
</feature>
<feature type="domain" description="AGC-kinase C-terminal" evidence="3">
    <location>
        <begin position="632"/>
        <end position="717"/>
    </location>
</feature>
<feature type="region of interest" description="Disordered" evidence="5">
    <location>
        <begin position="1"/>
        <end position="75"/>
    </location>
</feature>
<feature type="region of interest" description="Disordered" evidence="5">
    <location>
        <begin position="100"/>
        <end position="219"/>
    </location>
</feature>
<feature type="compositionally biased region" description="Polar residues" evidence="5">
    <location>
        <begin position="24"/>
        <end position="38"/>
    </location>
</feature>
<feature type="compositionally biased region" description="Low complexity" evidence="5">
    <location>
        <begin position="40"/>
        <end position="63"/>
    </location>
</feature>
<feature type="compositionally biased region" description="Polar residues" evidence="5">
    <location>
        <begin position="112"/>
        <end position="130"/>
    </location>
</feature>
<feature type="compositionally biased region" description="Polar residues" evidence="5">
    <location>
        <begin position="139"/>
        <end position="157"/>
    </location>
</feature>
<feature type="compositionally biased region" description="Polar residues" evidence="5">
    <location>
        <begin position="181"/>
        <end position="219"/>
    </location>
</feature>
<feature type="active site" description="Proton acceptor" evidence="2 4">
    <location>
        <position position="433"/>
    </location>
</feature>
<feature type="binding site" evidence="2">
    <location>
        <begin position="316"/>
        <end position="324"/>
    </location>
    <ligand>
        <name>ATP</name>
        <dbReference type="ChEBI" id="CHEBI:30616"/>
    </ligand>
</feature>
<feature type="binding site" evidence="2">
    <location>
        <position position="339"/>
    </location>
    <ligand>
        <name>ATP</name>
        <dbReference type="ChEBI" id="CHEBI:30616"/>
    </ligand>
</feature>
<sequence>MFGQGYYQGNRDQDSPLQRPPAAQFSSAYMEQQGSHQSLQEHLAYEQLQLQQQQQQQQQHAAAPHANGDGYGAGFTDIPTMLGSVGAPSPAFQPPMVVGMQQQPINTPPPTATSIYSQNNNSFTNVNDTTLAPGHSSPGHYSNSSDYSGQQPASSAYKQFGGSESPLQPAALPGLLDGSLGDQTLVGNQSSQGAMLSRQSLQCSSVPQSPNGGQRQTSGVGNYMYFERRPELLSKSTQEKAAAVKLKVENFYQSSVNHAIERNQRRVELESQLLSHGWSEERKNRQLSSLGKKESQFLRLRRTRLSLEDFHTVKVIGKGAFGEVRLVQKKDTGKIYAMKTLLKSEMYKKDQLAHVKAERDVLAGSDSPWVVSLYYSFQDAQYLYLIMEFLPGGDLMTMLIRWQIFTEDVTRFYMAECILAIEAIHKLGFIHRDIKPDNILIDIRGHIKLSDFGLSTGFHKTHDSNYYKKLLQEDEQQQNGGNMGKYPASGGGGNGGGNRNTMLVDAIHLTMTNRQQMQTWRKSRRLMAYSTVGTPDYIAPEIFLYQGYGQECDWWSLGAIMYECLIGWPPFCSETPQETYRKIMNFEQTLVFPDDIHISYEAEDLIRRLLSHADERLGRHGANEIKNHPFFRGVDWETIRQVGAPYIPKLSSVTDTRFFPTDELENVPDSPAMAQAAKQREQMLKQGGSAANTAQAKEDLPFIGYTYSRFDYLTRKNAL</sequence>
<organism>
    <name type="scientific">Eremothecium gossypii (strain ATCC 10895 / CBS 109.51 / FGSC 9923 / NRRL Y-1056)</name>
    <name type="common">Yeast</name>
    <name type="synonym">Ashbya gossypii</name>
    <dbReference type="NCBI Taxonomy" id="284811"/>
    <lineage>
        <taxon>Eukaryota</taxon>
        <taxon>Fungi</taxon>
        <taxon>Dikarya</taxon>
        <taxon>Ascomycota</taxon>
        <taxon>Saccharomycotina</taxon>
        <taxon>Saccharomycetes</taxon>
        <taxon>Saccharomycetales</taxon>
        <taxon>Saccharomycetaceae</taxon>
        <taxon>Eremothecium</taxon>
    </lineage>
</organism>
<reference key="1">
    <citation type="journal article" date="2004" name="Science">
        <title>The Ashbya gossypii genome as a tool for mapping the ancient Saccharomyces cerevisiae genome.</title>
        <authorList>
            <person name="Dietrich F.S."/>
            <person name="Voegeli S."/>
            <person name="Brachat S."/>
            <person name="Lerch A."/>
            <person name="Gates K."/>
            <person name="Steiner S."/>
            <person name="Mohr C."/>
            <person name="Poehlmann R."/>
            <person name="Luedi P."/>
            <person name="Choi S."/>
            <person name="Wing R.A."/>
            <person name="Flavier A."/>
            <person name="Gaffney T.D."/>
            <person name="Philippsen P."/>
        </authorList>
    </citation>
    <scope>NUCLEOTIDE SEQUENCE [LARGE SCALE GENOMIC DNA]</scope>
    <source>
        <strain>ATCC 10895 / CBS 109.51 / FGSC 9923 / NRRL Y-1056</strain>
    </source>
</reference>
<reference key="2">
    <citation type="journal article" date="2013" name="G3 (Bethesda)">
        <title>Genomes of Ashbya fungi isolated from insects reveal four mating-type loci, numerous translocations, lack of transposons, and distinct gene duplications.</title>
        <authorList>
            <person name="Dietrich F.S."/>
            <person name="Voegeli S."/>
            <person name="Kuo S."/>
            <person name="Philippsen P."/>
        </authorList>
    </citation>
    <scope>GENOME REANNOTATION</scope>
    <source>
        <strain>ATCC 10895 / CBS 109.51 / FGSC 9923 / NRRL Y-1056</strain>
    </source>
</reference>
<protein>
    <recommendedName>
        <fullName>Serine/threonine-protein kinase CBK1</fullName>
        <ecNumber>2.7.11.1</ecNumber>
    </recommendedName>
</protein>
<gene>
    <name type="primary">CBK1</name>
    <name type="ordered locus">AFR035W</name>
</gene>
<evidence type="ECO:0000250" key="1"/>
<evidence type="ECO:0000255" key="2">
    <source>
        <dbReference type="PROSITE-ProRule" id="PRU00159"/>
    </source>
</evidence>
<evidence type="ECO:0000255" key="3">
    <source>
        <dbReference type="PROSITE-ProRule" id="PRU00618"/>
    </source>
</evidence>
<evidence type="ECO:0000255" key="4">
    <source>
        <dbReference type="PROSITE-ProRule" id="PRU10027"/>
    </source>
</evidence>
<evidence type="ECO:0000256" key="5">
    <source>
        <dbReference type="SAM" id="MobiDB-lite"/>
    </source>
</evidence>
<evidence type="ECO:0000305" key="6"/>
<keyword id="KW-0067">ATP-binding</keyword>
<keyword id="KW-0418">Kinase</keyword>
<keyword id="KW-0547">Nucleotide-binding</keyword>
<keyword id="KW-0597">Phosphoprotein</keyword>
<keyword id="KW-1185">Reference proteome</keyword>
<keyword id="KW-0723">Serine/threonine-protein kinase</keyword>
<keyword id="KW-0808">Transferase</keyword>
<name>CBK1_EREGS</name>
<comment type="function">
    <text evidence="1">Protein kinase that seems to play a role in the regulation of cell morphogenesis and proliferation.</text>
</comment>
<comment type="catalytic activity">
    <reaction>
        <text>L-seryl-[protein] + ATP = O-phospho-L-seryl-[protein] + ADP + H(+)</text>
        <dbReference type="Rhea" id="RHEA:17989"/>
        <dbReference type="Rhea" id="RHEA-COMP:9863"/>
        <dbReference type="Rhea" id="RHEA-COMP:11604"/>
        <dbReference type="ChEBI" id="CHEBI:15378"/>
        <dbReference type="ChEBI" id="CHEBI:29999"/>
        <dbReference type="ChEBI" id="CHEBI:30616"/>
        <dbReference type="ChEBI" id="CHEBI:83421"/>
        <dbReference type="ChEBI" id="CHEBI:456216"/>
        <dbReference type="EC" id="2.7.11.1"/>
    </reaction>
</comment>
<comment type="catalytic activity">
    <reaction>
        <text>L-threonyl-[protein] + ATP = O-phospho-L-threonyl-[protein] + ADP + H(+)</text>
        <dbReference type="Rhea" id="RHEA:46608"/>
        <dbReference type="Rhea" id="RHEA-COMP:11060"/>
        <dbReference type="Rhea" id="RHEA-COMP:11605"/>
        <dbReference type="ChEBI" id="CHEBI:15378"/>
        <dbReference type="ChEBI" id="CHEBI:30013"/>
        <dbReference type="ChEBI" id="CHEBI:30616"/>
        <dbReference type="ChEBI" id="CHEBI:61977"/>
        <dbReference type="ChEBI" id="CHEBI:456216"/>
        <dbReference type="EC" id="2.7.11.1"/>
    </reaction>
</comment>
<comment type="similarity">
    <text evidence="6">Belongs to the protein kinase superfamily. STE Ser/Thr protein kinase family. COT1 subfamily.</text>
</comment>
<accession>Q754N7</accession>
<proteinExistence type="inferred from homology"/>